<comment type="function">
    <text evidence="1">Involved in mRNA degradation. Catalyzes the phosphorolysis of single-stranded polyribonucleotides processively in the 3'- to 5'-direction.</text>
</comment>
<comment type="catalytic activity">
    <reaction evidence="1">
        <text>RNA(n+1) + phosphate = RNA(n) + a ribonucleoside 5'-diphosphate</text>
        <dbReference type="Rhea" id="RHEA:22096"/>
        <dbReference type="Rhea" id="RHEA-COMP:14527"/>
        <dbReference type="Rhea" id="RHEA-COMP:17342"/>
        <dbReference type="ChEBI" id="CHEBI:43474"/>
        <dbReference type="ChEBI" id="CHEBI:57930"/>
        <dbReference type="ChEBI" id="CHEBI:140395"/>
        <dbReference type="EC" id="2.7.7.8"/>
    </reaction>
</comment>
<comment type="cofactor">
    <cofactor evidence="1">
        <name>Mg(2+)</name>
        <dbReference type="ChEBI" id="CHEBI:18420"/>
    </cofactor>
</comment>
<comment type="subunit">
    <text evidence="1">Component of the RNA degradosome, which is a multiprotein complex involved in RNA processing and mRNA degradation.</text>
</comment>
<comment type="subcellular location">
    <subcellularLocation>
        <location evidence="1">Cytoplasm</location>
    </subcellularLocation>
</comment>
<comment type="similarity">
    <text evidence="1">Belongs to the polyribonucleotide nucleotidyltransferase family.</text>
</comment>
<comment type="sequence caution" evidence="2">
    <conflict type="erroneous initiation">
        <sequence resource="EMBL-CDS" id="CAP51003"/>
    </conflict>
</comment>
<sequence length="704" mass="75641">MAKITKTFQYGKHTVTLETGEVARQASGAVIVKMDDTVLLVTAVAAKTAREGQDFFPLTVDYQEKFYAGGRIPGGFFKREGRATEKETLISRLIDRPIRPLFPEDYKNEVQIIATVMSMNPDIDGDIAALIGASAALSLAGTPFNGPIGAAKVGYKNGEYILNPTITELKDSQLELVVAGTANAVLMVESEAALLSEEVMLGAVTFGHREMQKVINIINELTVEAGTKPSTWVAPAKNTALISALKEAVGAQLAGAFQVRDKLQRRDAISAIKKDVLESLAGRVASEGWSSAELSKEFGELEYHTMRDSVLETKVRIDGRALDTVRPISVQAGVLPRTHGSALFTRGETQAIVVTTLGTARDGQVIDAVAGEYKENFLFHYNFPPYSVGECGRFGAPKRREIGHGRLAKRGVLAVMPSLEEFPYTIRVVSEITESNGSSSMASVCGSSLALMDAGVPVKAPVAGIAMGLVKEDDRFVVLSDILGDEDHLGDMDFKVAGTAEGVSALQMDIKIEGITEEIMKQALQQAKAGRLHILGEMSKALTTPRQELSDYAPRLLTIKIHPDKIREVIGKGGSTIQAITKETGTQIDIQDDGTIIIASVNAIAAQAAKSRIEQITSDVEPGRIYEGKVAKIMDFGAFVTILPGKDGLVHVSQISSERVEKVGDKLKEGDLVRVKVLEVDKQGRIRLSIKAVEEGEGVPASAE</sequence>
<protein>
    <recommendedName>
        <fullName evidence="1">Polyribonucleotide nucleotidyltransferase</fullName>
        <ecNumber evidence="1">2.7.7.8</ecNumber>
    </recommendedName>
    <alternativeName>
        <fullName evidence="1">Polynucleotide phosphorylase</fullName>
        <shortName evidence="1">PNPase</shortName>
    </alternativeName>
</protein>
<accession>B0RRB8</accession>
<dbReference type="EC" id="2.7.7.8" evidence="1"/>
<dbReference type="EMBL" id="AM920689">
    <property type="protein sequence ID" value="CAP51003.1"/>
    <property type="status" value="ALT_INIT"/>
    <property type="molecule type" value="Genomic_DNA"/>
</dbReference>
<dbReference type="SMR" id="B0RRB8"/>
<dbReference type="KEGG" id="xca:xcc-b100_1653"/>
<dbReference type="HOGENOM" id="CLU_004217_2_2_6"/>
<dbReference type="Proteomes" id="UP000001188">
    <property type="component" value="Chromosome"/>
</dbReference>
<dbReference type="GO" id="GO:0005829">
    <property type="term" value="C:cytosol"/>
    <property type="evidence" value="ECO:0007669"/>
    <property type="project" value="TreeGrafter"/>
</dbReference>
<dbReference type="GO" id="GO:0000175">
    <property type="term" value="F:3'-5'-RNA exonuclease activity"/>
    <property type="evidence" value="ECO:0007669"/>
    <property type="project" value="TreeGrafter"/>
</dbReference>
<dbReference type="GO" id="GO:0000287">
    <property type="term" value="F:magnesium ion binding"/>
    <property type="evidence" value="ECO:0007669"/>
    <property type="project" value="UniProtKB-UniRule"/>
</dbReference>
<dbReference type="GO" id="GO:0004654">
    <property type="term" value="F:polyribonucleotide nucleotidyltransferase activity"/>
    <property type="evidence" value="ECO:0007669"/>
    <property type="project" value="UniProtKB-UniRule"/>
</dbReference>
<dbReference type="GO" id="GO:0003723">
    <property type="term" value="F:RNA binding"/>
    <property type="evidence" value="ECO:0007669"/>
    <property type="project" value="UniProtKB-UniRule"/>
</dbReference>
<dbReference type="GO" id="GO:0006402">
    <property type="term" value="P:mRNA catabolic process"/>
    <property type="evidence" value="ECO:0007669"/>
    <property type="project" value="UniProtKB-UniRule"/>
</dbReference>
<dbReference type="GO" id="GO:0006396">
    <property type="term" value="P:RNA processing"/>
    <property type="evidence" value="ECO:0007669"/>
    <property type="project" value="InterPro"/>
</dbReference>
<dbReference type="CDD" id="cd02393">
    <property type="entry name" value="KH-I_PNPase"/>
    <property type="match status" value="1"/>
</dbReference>
<dbReference type="CDD" id="cd11363">
    <property type="entry name" value="RNase_PH_PNPase_1"/>
    <property type="match status" value="1"/>
</dbReference>
<dbReference type="CDD" id="cd11364">
    <property type="entry name" value="RNase_PH_PNPase_2"/>
    <property type="match status" value="1"/>
</dbReference>
<dbReference type="CDD" id="cd04472">
    <property type="entry name" value="S1_PNPase"/>
    <property type="match status" value="1"/>
</dbReference>
<dbReference type="FunFam" id="2.40.50.140:FF:000023">
    <property type="entry name" value="Polyribonucleotide nucleotidyltransferase"/>
    <property type="match status" value="1"/>
</dbReference>
<dbReference type="FunFam" id="3.30.1370.10:FF:000001">
    <property type="entry name" value="Polyribonucleotide nucleotidyltransferase"/>
    <property type="match status" value="1"/>
</dbReference>
<dbReference type="FunFam" id="3.30.230.70:FF:000001">
    <property type="entry name" value="Polyribonucleotide nucleotidyltransferase"/>
    <property type="match status" value="1"/>
</dbReference>
<dbReference type="FunFam" id="3.30.230.70:FF:000002">
    <property type="entry name" value="Polyribonucleotide nucleotidyltransferase"/>
    <property type="match status" value="1"/>
</dbReference>
<dbReference type="Gene3D" id="3.30.230.70">
    <property type="entry name" value="GHMP Kinase, N-terminal domain"/>
    <property type="match status" value="2"/>
</dbReference>
<dbReference type="Gene3D" id="3.30.1370.10">
    <property type="entry name" value="K Homology domain, type 1"/>
    <property type="match status" value="1"/>
</dbReference>
<dbReference type="Gene3D" id="2.40.50.140">
    <property type="entry name" value="Nucleic acid-binding proteins"/>
    <property type="match status" value="1"/>
</dbReference>
<dbReference type="HAMAP" id="MF_01595">
    <property type="entry name" value="PNPase"/>
    <property type="match status" value="1"/>
</dbReference>
<dbReference type="InterPro" id="IPR001247">
    <property type="entry name" value="ExoRNase_PH_dom1"/>
</dbReference>
<dbReference type="InterPro" id="IPR015847">
    <property type="entry name" value="ExoRNase_PH_dom2"/>
</dbReference>
<dbReference type="InterPro" id="IPR036345">
    <property type="entry name" value="ExoRNase_PH_dom2_sf"/>
</dbReference>
<dbReference type="InterPro" id="IPR004087">
    <property type="entry name" value="KH_dom"/>
</dbReference>
<dbReference type="InterPro" id="IPR004088">
    <property type="entry name" value="KH_dom_type_1"/>
</dbReference>
<dbReference type="InterPro" id="IPR036612">
    <property type="entry name" value="KH_dom_type_1_sf"/>
</dbReference>
<dbReference type="InterPro" id="IPR012340">
    <property type="entry name" value="NA-bd_OB-fold"/>
</dbReference>
<dbReference type="InterPro" id="IPR012162">
    <property type="entry name" value="PNPase"/>
</dbReference>
<dbReference type="InterPro" id="IPR027408">
    <property type="entry name" value="PNPase/RNase_PH_dom_sf"/>
</dbReference>
<dbReference type="InterPro" id="IPR015848">
    <property type="entry name" value="PNPase_PH_RNA-bd_bac/org-type"/>
</dbReference>
<dbReference type="InterPro" id="IPR036456">
    <property type="entry name" value="PNPase_PH_RNA-bd_sf"/>
</dbReference>
<dbReference type="InterPro" id="IPR020568">
    <property type="entry name" value="Ribosomal_Su5_D2-typ_SF"/>
</dbReference>
<dbReference type="InterPro" id="IPR003029">
    <property type="entry name" value="S1_domain"/>
</dbReference>
<dbReference type="NCBIfam" id="TIGR03591">
    <property type="entry name" value="polynuc_phos"/>
    <property type="match status" value="1"/>
</dbReference>
<dbReference type="NCBIfam" id="NF008805">
    <property type="entry name" value="PRK11824.1"/>
    <property type="match status" value="1"/>
</dbReference>
<dbReference type="PANTHER" id="PTHR11252">
    <property type="entry name" value="POLYRIBONUCLEOTIDE NUCLEOTIDYLTRANSFERASE"/>
    <property type="match status" value="1"/>
</dbReference>
<dbReference type="PANTHER" id="PTHR11252:SF0">
    <property type="entry name" value="POLYRIBONUCLEOTIDE NUCLEOTIDYLTRANSFERASE 1, MITOCHONDRIAL"/>
    <property type="match status" value="1"/>
</dbReference>
<dbReference type="Pfam" id="PF00013">
    <property type="entry name" value="KH_1"/>
    <property type="match status" value="1"/>
</dbReference>
<dbReference type="Pfam" id="PF03726">
    <property type="entry name" value="PNPase"/>
    <property type="match status" value="1"/>
</dbReference>
<dbReference type="Pfam" id="PF01138">
    <property type="entry name" value="RNase_PH"/>
    <property type="match status" value="2"/>
</dbReference>
<dbReference type="Pfam" id="PF03725">
    <property type="entry name" value="RNase_PH_C"/>
    <property type="match status" value="2"/>
</dbReference>
<dbReference type="Pfam" id="PF00575">
    <property type="entry name" value="S1"/>
    <property type="match status" value="1"/>
</dbReference>
<dbReference type="PIRSF" id="PIRSF005499">
    <property type="entry name" value="PNPase"/>
    <property type="match status" value="1"/>
</dbReference>
<dbReference type="SMART" id="SM00322">
    <property type="entry name" value="KH"/>
    <property type="match status" value="1"/>
</dbReference>
<dbReference type="SMART" id="SM00316">
    <property type="entry name" value="S1"/>
    <property type="match status" value="1"/>
</dbReference>
<dbReference type="SUPFAM" id="SSF54791">
    <property type="entry name" value="Eukaryotic type KH-domain (KH-domain type I)"/>
    <property type="match status" value="1"/>
</dbReference>
<dbReference type="SUPFAM" id="SSF50249">
    <property type="entry name" value="Nucleic acid-binding proteins"/>
    <property type="match status" value="1"/>
</dbReference>
<dbReference type="SUPFAM" id="SSF46915">
    <property type="entry name" value="Polynucleotide phosphorylase/guanosine pentaphosphate synthase (PNPase/GPSI), domain 3"/>
    <property type="match status" value="1"/>
</dbReference>
<dbReference type="SUPFAM" id="SSF55666">
    <property type="entry name" value="Ribonuclease PH domain 2-like"/>
    <property type="match status" value="2"/>
</dbReference>
<dbReference type="SUPFAM" id="SSF54211">
    <property type="entry name" value="Ribosomal protein S5 domain 2-like"/>
    <property type="match status" value="2"/>
</dbReference>
<dbReference type="PROSITE" id="PS50084">
    <property type="entry name" value="KH_TYPE_1"/>
    <property type="match status" value="1"/>
</dbReference>
<dbReference type="PROSITE" id="PS50126">
    <property type="entry name" value="S1"/>
    <property type="match status" value="1"/>
</dbReference>
<name>PNP_XANCB</name>
<keyword id="KW-0963">Cytoplasm</keyword>
<keyword id="KW-0460">Magnesium</keyword>
<keyword id="KW-0479">Metal-binding</keyword>
<keyword id="KW-0548">Nucleotidyltransferase</keyword>
<keyword id="KW-0694">RNA-binding</keyword>
<keyword id="KW-0808">Transferase</keyword>
<proteinExistence type="inferred from homology"/>
<evidence type="ECO:0000255" key="1">
    <source>
        <dbReference type="HAMAP-Rule" id="MF_01595"/>
    </source>
</evidence>
<evidence type="ECO:0000305" key="2"/>
<reference key="1">
    <citation type="journal article" date="2008" name="J. Biotechnol.">
        <title>The genome of Xanthomonas campestris pv. campestris B100 and its use for the reconstruction of metabolic pathways involved in xanthan biosynthesis.</title>
        <authorList>
            <person name="Vorhoelter F.-J."/>
            <person name="Schneiker S."/>
            <person name="Goesmann A."/>
            <person name="Krause L."/>
            <person name="Bekel T."/>
            <person name="Kaiser O."/>
            <person name="Linke B."/>
            <person name="Patschkowski T."/>
            <person name="Rueckert C."/>
            <person name="Schmid J."/>
            <person name="Sidhu V.K."/>
            <person name="Sieber V."/>
            <person name="Tauch A."/>
            <person name="Watt S.A."/>
            <person name="Weisshaar B."/>
            <person name="Becker A."/>
            <person name="Niehaus K."/>
            <person name="Puehler A."/>
        </authorList>
    </citation>
    <scope>NUCLEOTIDE SEQUENCE [LARGE SCALE GENOMIC DNA]</scope>
    <source>
        <strain>B100</strain>
    </source>
</reference>
<feature type="chain" id="PRO_0000381926" description="Polyribonucleotide nucleotidyltransferase">
    <location>
        <begin position="1"/>
        <end position="704"/>
    </location>
</feature>
<feature type="domain" description="KH" evidence="1">
    <location>
        <begin position="554"/>
        <end position="613"/>
    </location>
</feature>
<feature type="domain" description="S1 motif" evidence="1">
    <location>
        <begin position="623"/>
        <end position="691"/>
    </location>
</feature>
<feature type="binding site" evidence="1">
    <location>
        <position position="487"/>
    </location>
    <ligand>
        <name>Mg(2+)</name>
        <dbReference type="ChEBI" id="CHEBI:18420"/>
    </ligand>
</feature>
<feature type="binding site" evidence="1">
    <location>
        <position position="493"/>
    </location>
    <ligand>
        <name>Mg(2+)</name>
        <dbReference type="ChEBI" id="CHEBI:18420"/>
    </ligand>
</feature>
<gene>
    <name evidence="1" type="primary">pnp</name>
    <name type="ordered locus">xcc-b100_1653</name>
</gene>
<organism>
    <name type="scientific">Xanthomonas campestris pv. campestris (strain B100)</name>
    <dbReference type="NCBI Taxonomy" id="509169"/>
    <lineage>
        <taxon>Bacteria</taxon>
        <taxon>Pseudomonadati</taxon>
        <taxon>Pseudomonadota</taxon>
        <taxon>Gammaproteobacteria</taxon>
        <taxon>Lysobacterales</taxon>
        <taxon>Lysobacteraceae</taxon>
        <taxon>Xanthomonas</taxon>
    </lineage>
</organism>